<gene>
    <name type="primary">BZIP25</name>
    <name type="synonym">BZO2H4</name>
    <name type="ordered locus">At3g54620</name>
    <name type="ORF">T14E10.190</name>
</gene>
<name>BZP25_ARATH</name>
<organism>
    <name type="scientific">Arabidopsis thaliana</name>
    <name type="common">Mouse-ear cress</name>
    <dbReference type="NCBI Taxonomy" id="3702"/>
    <lineage>
        <taxon>Eukaryota</taxon>
        <taxon>Viridiplantae</taxon>
        <taxon>Streptophyta</taxon>
        <taxon>Embryophyta</taxon>
        <taxon>Tracheophyta</taxon>
        <taxon>Spermatophyta</taxon>
        <taxon>Magnoliopsida</taxon>
        <taxon>eudicotyledons</taxon>
        <taxon>Gunneridae</taxon>
        <taxon>Pentapetalae</taxon>
        <taxon>rosids</taxon>
        <taxon>malvids</taxon>
        <taxon>Brassicales</taxon>
        <taxon>Brassicaceae</taxon>
        <taxon>Camelineae</taxon>
        <taxon>Arabidopsis</taxon>
    </lineage>
</organism>
<dbReference type="EMBL" id="AJ010860">
    <property type="protein sequence ID" value="CAC79658.1"/>
    <property type="molecule type" value="mRNA"/>
</dbReference>
<dbReference type="EMBL" id="AL138656">
    <property type="protein sequence ID" value="CAB77582.1"/>
    <property type="molecule type" value="Genomic_DNA"/>
</dbReference>
<dbReference type="EMBL" id="CP002686">
    <property type="protein sequence ID" value="AEE79256.1"/>
    <property type="molecule type" value="Genomic_DNA"/>
</dbReference>
<dbReference type="EMBL" id="CP002686">
    <property type="protein sequence ID" value="AEE79257.1"/>
    <property type="molecule type" value="Genomic_DNA"/>
</dbReference>
<dbReference type="EMBL" id="CP002686">
    <property type="protein sequence ID" value="AEE79258.1"/>
    <property type="status" value="ALT_SEQ"/>
    <property type="molecule type" value="Genomic_DNA"/>
</dbReference>
<dbReference type="EMBL" id="AY054645">
    <property type="protein sequence ID" value="AAK96836.1"/>
    <property type="molecule type" value="mRNA"/>
</dbReference>
<dbReference type="EMBL" id="AY057509">
    <property type="protein sequence ID" value="AAL09750.1"/>
    <property type="molecule type" value="mRNA"/>
</dbReference>
<dbReference type="EMBL" id="AY081494">
    <property type="protein sequence ID" value="AAM10056.1"/>
    <property type="molecule type" value="mRNA"/>
</dbReference>
<dbReference type="PIR" id="T47621">
    <property type="entry name" value="T47621"/>
</dbReference>
<dbReference type="RefSeq" id="NP_001118838.1">
    <molecule id="Q9M1G6-2"/>
    <property type="nucleotide sequence ID" value="NM_001125366.1"/>
</dbReference>
<dbReference type="RefSeq" id="NP_001190091.1">
    <property type="nucleotide sequence ID" value="NM_001203162.1"/>
</dbReference>
<dbReference type="RefSeq" id="NP_567003.2">
    <molecule id="Q9M1G6-1"/>
    <property type="nucleotide sequence ID" value="NM_115319.4"/>
</dbReference>
<dbReference type="SMR" id="Q9M1G6"/>
<dbReference type="BioGRID" id="9943">
    <property type="interactions" value="12"/>
</dbReference>
<dbReference type="FunCoup" id="Q9M1G6">
    <property type="interactions" value="863"/>
</dbReference>
<dbReference type="IntAct" id="Q9M1G6">
    <property type="interactions" value="13"/>
</dbReference>
<dbReference type="MINT" id="Q9M1G6"/>
<dbReference type="STRING" id="3702.Q9M1G6"/>
<dbReference type="GlyGen" id="Q9M1G6">
    <property type="glycosylation" value="1 site"/>
</dbReference>
<dbReference type="iPTMnet" id="Q9M1G6"/>
<dbReference type="PaxDb" id="3702-AT3G54620.1"/>
<dbReference type="ProteomicsDB" id="240444">
    <molecule id="Q9M1G6-1"/>
</dbReference>
<dbReference type="EnsemblPlants" id="AT3G54620.1">
    <molecule id="Q9M1G6-1"/>
    <property type="protein sequence ID" value="AT3G54620.1"/>
    <property type="gene ID" value="AT3G54620"/>
</dbReference>
<dbReference type="EnsemblPlants" id="AT3G54620.2">
    <molecule id="Q9M1G6-2"/>
    <property type="protein sequence ID" value="AT3G54620.2"/>
    <property type="gene ID" value="AT3G54620"/>
</dbReference>
<dbReference type="GeneID" id="824627"/>
<dbReference type="Gramene" id="AT3G54620.1">
    <molecule id="Q9M1G6-1"/>
    <property type="protein sequence ID" value="AT3G54620.1"/>
    <property type="gene ID" value="AT3G54620"/>
</dbReference>
<dbReference type="Gramene" id="AT3G54620.2">
    <molecule id="Q9M1G6-2"/>
    <property type="protein sequence ID" value="AT3G54620.2"/>
    <property type="gene ID" value="AT3G54620"/>
</dbReference>
<dbReference type="KEGG" id="ath:AT3G54620"/>
<dbReference type="Araport" id="AT3G54620"/>
<dbReference type="TAIR" id="AT3G54620">
    <property type="gene designation" value="BZIP25"/>
</dbReference>
<dbReference type="eggNOG" id="ENOG502QX6A">
    <property type="taxonomic scope" value="Eukaryota"/>
</dbReference>
<dbReference type="HOGENOM" id="CLU_037575_3_0_1"/>
<dbReference type="InParanoid" id="Q9M1G6"/>
<dbReference type="OMA" id="WAFHRLL"/>
<dbReference type="PhylomeDB" id="Q9M1G6"/>
<dbReference type="PRO" id="PR:Q9M1G6"/>
<dbReference type="Proteomes" id="UP000006548">
    <property type="component" value="Chromosome 3"/>
</dbReference>
<dbReference type="ExpressionAtlas" id="Q9M1G6">
    <property type="expression patterns" value="baseline and differential"/>
</dbReference>
<dbReference type="GO" id="GO:0005634">
    <property type="term" value="C:nucleus"/>
    <property type="evidence" value="ECO:0007669"/>
    <property type="project" value="UniProtKB-SubCell"/>
</dbReference>
<dbReference type="GO" id="GO:0003677">
    <property type="term" value="F:DNA binding"/>
    <property type="evidence" value="ECO:0007669"/>
    <property type="project" value="UniProtKB-KW"/>
</dbReference>
<dbReference type="GO" id="GO:0003700">
    <property type="term" value="F:DNA-binding transcription factor activity"/>
    <property type="evidence" value="ECO:0000314"/>
    <property type="project" value="UniProtKB"/>
</dbReference>
<dbReference type="GO" id="GO:0045735">
    <property type="term" value="F:nutrient reservoir activity"/>
    <property type="evidence" value="ECO:0007669"/>
    <property type="project" value="UniProtKB-KW"/>
</dbReference>
<dbReference type="GO" id="GO:0046982">
    <property type="term" value="F:protein heterodimerization activity"/>
    <property type="evidence" value="ECO:0000353"/>
    <property type="project" value="UniProtKB"/>
</dbReference>
<dbReference type="GO" id="GO:0045893">
    <property type="term" value="P:positive regulation of DNA-templated transcription"/>
    <property type="evidence" value="ECO:0000314"/>
    <property type="project" value="UniProtKB"/>
</dbReference>
<dbReference type="GO" id="GO:2000693">
    <property type="term" value="P:positive regulation of seed maturation"/>
    <property type="evidence" value="ECO:0000314"/>
    <property type="project" value="UniProtKB"/>
</dbReference>
<dbReference type="FunFam" id="1.20.5.170:FF:000020">
    <property type="entry name" value="BZIP transcription factor"/>
    <property type="match status" value="1"/>
</dbReference>
<dbReference type="Gene3D" id="1.20.5.170">
    <property type="match status" value="1"/>
</dbReference>
<dbReference type="InterPro" id="IPR020983">
    <property type="entry name" value="Basic_leucine-zipper_C"/>
</dbReference>
<dbReference type="InterPro" id="IPR004827">
    <property type="entry name" value="bZIP"/>
</dbReference>
<dbReference type="InterPro" id="IPR046347">
    <property type="entry name" value="bZIP_sf"/>
</dbReference>
<dbReference type="PANTHER" id="PTHR46408:SF14">
    <property type="entry name" value="BASIC LEUCINE ZIPPER 25"/>
    <property type="match status" value="1"/>
</dbReference>
<dbReference type="PANTHER" id="PTHR46408">
    <property type="entry name" value="BASIC LEUCINE ZIPPER 63"/>
    <property type="match status" value="1"/>
</dbReference>
<dbReference type="Pfam" id="PF00170">
    <property type="entry name" value="bZIP_1"/>
    <property type="match status" value="1"/>
</dbReference>
<dbReference type="Pfam" id="PF12498">
    <property type="entry name" value="bZIP_C"/>
    <property type="match status" value="1"/>
</dbReference>
<dbReference type="SMART" id="SM00338">
    <property type="entry name" value="BRLZ"/>
    <property type="match status" value="1"/>
</dbReference>
<dbReference type="SUPFAM" id="SSF57959">
    <property type="entry name" value="Leucine zipper domain"/>
    <property type="match status" value="1"/>
</dbReference>
<dbReference type="PROSITE" id="PS50217">
    <property type="entry name" value="BZIP"/>
    <property type="match status" value="1"/>
</dbReference>
<dbReference type="PROSITE" id="PS00036">
    <property type="entry name" value="BZIP_BASIC"/>
    <property type="match status" value="1"/>
</dbReference>
<feature type="chain" id="PRO_0000416561" description="Basic leucine zipper 25">
    <location>
        <begin position="1"/>
        <end position="403"/>
    </location>
</feature>
<feature type="domain" description="bZIP" evidence="2">
    <location>
        <begin position="229"/>
        <end position="292"/>
    </location>
</feature>
<feature type="region of interest" description="Disordered" evidence="3">
    <location>
        <begin position="13"/>
        <end position="128"/>
    </location>
</feature>
<feature type="region of interest" description="Disordered" evidence="3">
    <location>
        <begin position="156"/>
        <end position="259"/>
    </location>
</feature>
<feature type="region of interest" description="Basic motif" evidence="2">
    <location>
        <begin position="231"/>
        <end position="250"/>
    </location>
</feature>
<feature type="region of interest" description="Leucine-zipper" evidence="2">
    <location>
        <begin position="264"/>
        <end position="271"/>
    </location>
</feature>
<feature type="region of interest" description="Disordered" evidence="3">
    <location>
        <begin position="332"/>
        <end position="361"/>
    </location>
</feature>
<feature type="region of interest" description="Disordered" evidence="3">
    <location>
        <begin position="380"/>
        <end position="403"/>
    </location>
</feature>
<feature type="short sequence motif" description="Nuclear localization signal" evidence="1">
    <location>
        <begin position="233"/>
        <end position="240"/>
    </location>
</feature>
<feature type="compositionally biased region" description="Low complexity" evidence="3">
    <location>
        <begin position="24"/>
        <end position="33"/>
    </location>
</feature>
<feature type="compositionally biased region" description="Polar residues" evidence="3">
    <location>
        <begin position="56"/>
        <end position="69"/>
    </location>
</feature>
<feature type="compositionally biased region" description="Low complexity" evidence="3">
    <location>
        <begin position="115"/>
        <end position="128"/>
    </location>
</feature>
<feature type="compositionally biased region" description="Low complexity" evidence="3">
    <location>
        <begin position="161"/>
        <end position="174"/>
    </location>
</feature>
<feature type="compositionally biased region" description="Polar residues" evidence="3">
    <location>
        <begin position="175"/>
        <end position="195"/>
    </location>
</feature>
<feature type="compositionally biased region" description="Acidic residues" evidence="3">
    <location>
        <begin position="212"/>
        <end position="226"/>
    </location>
</feature>
<feature type="compositionally biased region" description="Low complexity" evidence="3">
    <location>
        <begin position="332"/>
        <end position="345"/>
    </location>
</feature>
<feature type="compositionally biased region" description="Polar residues" evidence="3">
    <location>
        <begin position="351"/>
        <end position="361"/>
    </location>
</feature>
<feature type="modified residue" description="Phosphoserine" evidence="14 15">
    <location>
        <position position="213"/>
    </location>
</feature>
<feature type="splice variant" id="VSP_042644" description="In isoform 3." evidence="12">
    <original>VG</original>
    <variation>AN</variation>
    <location>
        <begin position="261"/>
        <end position="262"/>
    </location>
</feature>
<feature type="splice variant" id="VSP_042645" description="In isoform 2." evidence="13">
    <original>GQLRAEHSTLINRLSDMNHKYDAAAVDNRILRAD</original>
    <variation>RSFISCSYIYTFLESFLLFNSLQGFIGKVFTNCR</variation>
    <location>
        <begin position="262"/>
        <end position="295"/>
    </location>
</feature>
<feature type="splice variant" id="VSP_042646" description="In isoform 3." evidence="12">
    <location>
        <begin position="263"/>
        <end position="403"/>
    </location>
</feature>
<feature type="splice variant" id="VSP_042647" description="In isoform 2." evidence="13">
    <location>
        <begin position="296"/>
        <end position="403"/>
    </location>
</feature>
<feature type="sequence conflict" description="In Ref. 1; CAC79658." evidence="13" ref="1">
    <original>R</original>
    <variation>K</variation>
    <location>
        <position position="244"/>
    </location>
</feature>
<protein>
    <recommendedName>
        <fullName>Basic leucine zipper 25</fullName>
        <shortName>AtbZIP25</shortName>
        <shortName>bZIP protein 25</shortName>
    </recommendedName>
    <alternativeName>
        <fullName>Basic leucine zipper OPAQUE 2 homolog 4</fullName>
        <shortName>Basic leucine zipper O2 homolog 4</shortName>
    </alternativeName>
</protein>
<accession>Q9M1G6</accession>
<accession>F4JDZ5</accession>
<accession>F4JDZ6</accession>
<accession>Q712N9</accession>
<accession>Q940H0</accession>
<evidence type="ECO:0000250" key="1"/>
<evidence type="ECO:0000255" key="2">
    <source>
        <dbReference type="PROSITE-ProRule" id="PRU00978"/>
    </source>
</evidence>
<evidence type="ECO:0000256" key="3">
    <source>
        <dbReference type="SAM" id="MobiDB-lite"/>
    </source>
</evidence>
<evidence type="ECO:0000269" key="4">
    <source>
    </source>
</evidence>
<evidence type="ECO:0000269" key="5">
    <source>
    </source>
</evidence>
<evidence type="ECO:0000269" key="6">
    <source>
    </source>
</evidence>
<evidence type="ECO:0000269" key="7">
    <source>
    </source>
</evidence>
<evidence type="ECO:0000269" key="8">
    <source>
    </source>
</evidence>
<evidence type="ECO:0000269" key="9">
    <source>
    </source>
</evidence>
<evidence type="ECO:0000269" key="10">
    <source>
    </source>
</evidence>
<evidence type="ECO:0000269" key="11">
    <source>
    </source>
</evidence>
<evidence type="ECO:0000303" key="12">
    <source>
    </source>
</evidence>
<evidence type="ECO:0000305" key="13"/>
<evidence type="ECO:0007744" key="14">
    <source>
    </source>
</evidence>
<evidence type="ECO:0007744" key="15">
    <source>
    </source>
</evidence>
<reference key="1">
    <citation type="journal article" date="2003" name="J. Biol. Chem.">
        <title>Synergistic activation of seed storage protein gene expression in Arabidopsis by ABI3 and two bZIPs related to OPAQUE2.</title>
        <authorList>
            <person name="Lara P."/>
            <person name="Onate-Sanchez L."/>
            <person name="Abraham Z."/>
            <person name="Ferrandiz C."/>
            <person name="Diaz I."/>
            <person name="Carbonero P."/>
            <person name="Vicente-Carbajosa J."/>
        </authorList>
    </citation>
    <scope>NUCLEOTIDE SEQUENCE [MRNA] (ISOFORM 1)</scope>
    <scope>FUNCTION</scope>
    <scope>DEVELOPMENTAL STAGE</scope>
    <scope>TISSUE SPECIFICITY</scope>
    <scope>INTERACTION WITH ABI3</scope>
    <scope>GENE FAMILY</scope>
    <source>
        <strain>cv. Columbia</strain>
    </source>
</reference>
<reference key="2">
    <citation type="journal article" date="2000" name="Nature">
        <title>Sequence and analysis of chromosome 3 of the plant Arabidopsis thaliana.</title>
        <authorList>
            <person name="Salanoubat M."/>
            <person name="Lemcke K."/>
            <person name="Rieger M."/>
            <person name="Ansorge W."/>
            <person name="Unseld M."/>
            <person name="Fartmann B."/>
            <person name="Valle G."/>
            <person name="Bloecker H."/>
            <person name="Perez-Alonso M."/>
            <person name="Obermaier B."/>
            <person name="Delseny M."/>
            <person name="Boutry M."/>
            <person name="Grivell L.A."/>
            <person name="Mache R."/>
            <person name="Puigdomenech P."/>
            <person name="De Simone V."/>
            <person name="Choisne N."/>
            <person name="Artiguenave F."/>
            <person name="Robert C."/>
            <person name="Brottier P."/>
            <person name="Wincker P."/>
            <person name="Cattolico L."/>
            <person name="Weissenbach J."/>
            <person name="Saurin W."/>
            <person name="Quetier F."/>
            <person name="Schaefer M."/>
            <person name="Mueller-Auer S."/>
            <person name="Gabel C."/>
            <person name="Fuchs M."/>
            <person name="Benes V."/>
            <person name="Wurmbach E."/>
            <person name="Drzonek H."/>
            <person name="Erfle H."/>
            <person name="Jordan N."/>
            <person name="Bangert S."/>
            <person name="Wiedelmann R."/>
            <person name="Kranz H."/>
            <person name="Voss H."/>
            <person name="Holland R."/>
            <person name="Brandt P."/>
            <person name="Nyakatura G."/>
            <person name="Vezzi A."/>
            <person name="D'Angelo M."/>
            <person name="Pallavicini A."/>
            <person name="Toppo S."/>
            <person name="Simionati B."/>
            <person name="Conrad A."/>
            <person name="Hornischer K."/>
            <person name="Kauer G."/>
            <person name="Loehnert T.-H."/>
            <person name="Nordsiek G."/>
            <person name="Reichelt J."/>
            <person name="Scharfe M."/>
            <person name="Schoen O."/>
            <person name="Bargues M."/>
            <person name="Terol J."/>
            <person name="Climent J."/>
            <person name="Navarro P."/>
            <person name="Collado C."/>
            <person name="Perez-Perez A."/>
            <person name="Ottenwaelder B."/>
            <person name="Duchemin D."/>
            <person name="Cooke R."/>
            <person name="Laudie M."/>
            <person name="Berger-Llauro C."/>
            <person name="Purnelle B."/>
            <person name="Masuy D."/>
            <person name="de Haan M."/>
            <person name="Maarse A.C."/>
            <person name="Alcaraz J.-P."/>
            <person name="Cottet A."/>
            <person name="Casacuberta E."/>
            <person name="Monfort A."/>
            <person name="Argiriou A."/>
            <person name="Flores M."/>
            <person name="Liguori R."/>
            <person name="Vitale D."/>
            <person name="Mannhaupt G."/>
            <person name="Haase D."/>
            <person name="Schoof H."/>
            <person name="Rudd S."/>
            <person name="Zaccaria P."/>
            <person name="Mewes H.-W."/>
            <person name="Mayer K.F.X."/>
            <person name="Kaul S."/>
            <person name="Town C.D."/>
            <person name="Koo H.L."/>
            <person name="Tallon L.J."/>
            <person name="Jenkins J."/>
            <person name="Rooney T."/>
            <person name="Rizzo M."/>
            <person name="Walts A."/>
            <person name="Utterback T."/>
            <person name="Fujii C.Y."/>
            <person name="Shea T.P."/>
            <person name="Creasy T.H."/>
            <person name="Haas B."/>
            <person name="Maiti R."/>
            <person name="Wu D."/>
            <person name="Peterson J."/>
            <person name="Van Aken S."/>
            <person name="Pai G."/>
            <person name="Militscher J."/>
            <person name="Sellers P."/>
            <person name="Gill J.E."/>
            <person name="Feldblyum T.V."/>
            <person name="Preuss D."/>
            <person name="Lin X."/>
            <person name="Nierman W.C."/>
            <person name="Salzberg S.L."/>
            <person name="White O."/>
            <person name="Venter J.C."/>
            <person name="Fraser C.M."/>
            <person name="Kaneko T."/>
            <person name="Nakamura Y."/>
            <person name="Sato S."/>
            <person name="Kato T."/>
            <person name="Asamizu E."/>
            <person name="Sasamoto S."/>
            <person name="Kimura T."/>
            <person name="Idesawa K."/>
            <person name="Kawashima K."/>
            <person name="Kishida Y."/>
            <person name="Kiyokawa C."/>
            <person name="Kohara M."/>
            <person name="Matsumoto M."/>
            <person name="Matsuno A."/>
            <person name="Muraki A."/>
            <person name="Nakayama S."/>
            <person name="Nakazaki N."/>
            <person name="Shinpo S."/>
            <person name="Takeuchi C."/>
            <person name="Wada T."/>
            <person name="Watanabe A."/>
            <person name="Yamada M."/>
            <person name="Yasuda M."/>
            <person name="Tabata S."/>
        </authorList>
    </citation>
    <scope>NUCLEOTIDE SEQUENCE [LARGE SCALE GENOMIC DNA]</scope>
    <source>
        <strain>cv. Columbia</strain>
    </source>
</reference>
<reference key="3">
    <citation type="journal article" date="2017" name="Plant J.">
        <title>Araport11: a complete reannotation of the Arabidopsis thaliana reference genome.</title>
        <authorList>
            <person name="Cheng C.Y."/>
            <person name="Krishnakumar V."/>
            <person name="Chan A.P."/>
            <person name="Thibaud-Nissen F."/>
            <person name="Schobel S."/>
            <person name="Town C.D."/>
        </authorList>
    </citation>
    <scope>GENOME REANNOTATION</scope>
    <source>
        <strain>cv. Columbia</strain>
    </source>
</reference>
<reference key="4">
    <citation type="journal article" date="2003" name="Science">
        <title>Empirical analysis of transcriptional activity in the Arabidopsis genome.</title>
        <authorList>
            <person name="Yamada K."/>
            <person name="Lim J."/>
            <person name="Dale J.M."/>
            <person name="Chen H."/>
            <person name="Shinn P."/>
            <person name="Palm C.J."/>
            <person name="Southwick A.M."/>
            <person name="Wu H.C."/>
            <person name="Kim C.J."/>
            <person name="Nguyen M."/>
            <person name="Pham P.K."/>
            <person name="Cheuk R.F."/>
            <person name="Karlin-Newmann G."/>
            <person name="Liu S.X."/>
            <person name="Lam B."/>
            <person name="Sakano H."/>
            <person name="Wu T."/>
            <person name="Yu G."/>
            <person name="Miranda M."/>
            <person name="Quach H.L."/>
            <person name="Tripp M."/>
            <person name="Chang C.H."/>
            <person name="Lee J.M."/>
            <person name="Toriumi M.J."/>
            <person name="Chan M.M."/>
            <person name="Tang C.C."/>
            <person name="Onodera C.S."/>
            <person name="Deng J.M."/>
            <person name="Akiyama K."/>
            <person name="Ansari Y."/>
            <person name="Arakawa T."/>
            <person name="Banh J."/>
            <person name="Banno F."/>
            <person name="Bowser L."/>
            <person name="Brooks S.Y."/>
            <person name="Carninci P."/>
            <person name="Chao Q."/>
            <person name="Choy N."/>
            <person name="Enju A."/>
            <person name="Goldsmith A.D."/>
            <person name="Gurjal M."/>
            <person name="Hansen N.F."/>
            <person name="Hayashizaki Y."/>
            <person name="Johnson-Hopson C."/>
            <person name="Hsuan V.W."/>
            <person name="Iida K."/>
            <person name="Karnes M."/>
            <person name="Khan S."/>
            <person name="Koesema E."/>
            <person name="Ishida J."/>
            <person name="Jiang P.X."/>
            <person name="Jones T."/>
            <person name="Kawai J."/>
            <person name="Kamiya A."/>
            <person name="Meyers C."/>
            <person name="Nakajima M."/>
            <person name="Narusaka M."/>
            <person name="Seki M."/>
            <person name="Sakurai T."/>
            <person name="Satou M."/>
            <person name="Tamse R."/>
            <person name="Vaysberg M."/>
            <person name="Wallender E.K."/>
            <person name="Wong C."/>
            <person name="Yamamura Y."/>
            <person name="Yuan S."/>
            <person name="Shinozaki K."/>
            <person name="Davis R.W."/>
            <person name="Theologis A."/>
            <person name="Ecker J.R."/>
        </authorList>
    </citation>
    <scope>NUCLEOTIDE SEQUENCE [LARGE SCALE MRNA] (ISOFORMS 1 AND 3)</scope>
    <source>
        <strain>cv. Columbia</strain>
    </source>
</reference>
<reference key="5">
    <citation type="journal article" date="2002" name="Trends Plant Sci.">
        <title>bZIP transcription factors in Arabidopsis.</title>
        <authorList>
            <person name="Jakoby M."/>
            <person name="Weisshaar B."/>
            <person name="Droege-Laser W."/>
            <person name="Vicente-Carbajosa J."/>
            <person name="Tiedemann J."/>
            <person name="Kroj T."/>
            <person name="Parcy F."/>
        </authorList>
    </citation>
    <scope>GENE FAMILY</scope>
    <scope>NOMENCLATURE</scope>
</reference>
<reference key="6">
    <citation type="journal article" date="2003" name="J. Mol. Evol.">
        <title>Evolutionary pattern of angiosperm bZIP factors homologous to the maize Opaque2 regulatory protein.</title>
        <authorList>
            <person name="Vincentz M."/>
            <person name="Bandeira-Kobarg C."/>
            <person name="Gauer L."/>
            <person name="Schloegl P."/>
            <person name="Leite A."/>
        </authorList>
    </citation>
    <scope>GENE FAMILY</scope>
    <source>
        <strain>cv. Columbia</strain>
    </source>
</reference>
<reference key="7">
    <citation type="journal article" date="2006" name="EMBO J.">
        <title>Combinatorial control of Arabidopsis proline dehydrogenase transcription by specific heterodimerisation of bZIP transcription factors.</title>
        <authorList>
            <person name="Weltmeier F."/>
            <person name="Ehlert A."/>
            <person name="Mayer C.S."/>
            <person name="Dietrich K."/>
            <person name="Wang X."/>
            <person name="Schuetze K."/>
            <person name="Alonso R."/>
            <person name="Harter K."/>
            <person name="Vicente-Carbajosa J."/>
            <person name="Droege-Laser W."/>
        </authorList>
    </citation>
    <scope>INTERACTION WITH BZIP53</scope>
</reference>
<reference key="8">
    <citation type="journal article" date="2006" name="Mol. Biol. Evol.">
        <title>Cross-species annotation of basic leucine zipper factor interactions: Insight into the evolution of closed interaction networks.</title>
        <authorList>
            <person name="Deppmann C.D."/>
            <person name="Alvania R.S."/>
            <person name="Taparowsky E.J."/>
        </authorList>
    </citation>
    <scope>SUBUNIT</scope>
</reference>
<reference key="9">
    <citation type="journal article" date="2006" name="Plant J.">
        <title>Two-hybrid protein-protein interaction analysis in Arabidopsis protoplasts: establishment of a heterodimerization map of group C and group S bZIP transcription factors.</title>
        <authorList>
            <person name="Ehlert A."/>
            <person name="Weltmeier F."/>
            <person name="Wang X."/>
            <person name="Mayer C.S."/>
            <person name="Smeekens S."/>
            <person name="Vicente-Carbajosa J."/>
            <person name="Droege-Laser W."/>
        </authorList>
    </citation>
    <scope>INTERACTION WITH BZIP1; BZIP2; BZIP9; BZIP11; BZIP44 AND BZIP53</scope>
</reference>
<reference key="10">
    <citation type="journal article" date="2009" name="J. Proteomics">
        <title>Phosphoproteomic analysis of nuclei-enriched fractions from Arabidopsis thaliana.</title>
        <authorList>
            <person name="Jones A.M.E."/>
            <person name="MacLean D."/>
            <person name="Studholme D.J."/>
            <person name="Serna-Sanz A."/>
            <person name="Andreasson E."/>
            <person name="Rathjen J.P."/>
            <person name="Peck S.C."/>
        </authorList>
    </citation>
    <scope>PHOSPHORYLATION [LARGE SCALE ANALYSIS] AT SER-213</scope>
    <scope>IDENTIFICATION BY MASS SPECTROMETRY [LARGE SCALE ANALYSIS]</scope>
    <source>
        <strain>cv. Columbia</strain>
    </source>
</reference>
<reference key="11">
    <citation type="journal article" date="2009" name="Plant Cell">
        <title>A pivotal role of the basic leucine zipper transcription factor bZIP53 in the regulation of Arabidopsis seed maturation gene expression based on heterodimerization and protein complex formation.</title>
        <authorList>
            <person name="Alonso R."/>
            <person name="Onate-Sanchez L."/>
            <person name="Weltmeier F."/>
            <person name="Ehlert A."/>
            <person name="Diaz I."/>
            <person name="Dietrich K."/>
            <person name="Vicente-Carbajosa J."/>
            <person name="Droege-Laser W."/>
        </authorList>
    </citation>
    <scope>FUNCTION</scope>
    <scope>INTERACTION WITH BZIP53 AND ABI3</scope>
</reference>
<reference key="12">
    <citation type="journal article" date="2009" name="Plant Mol. Biol.">
        <title>Expression patterns within the Arabidopsis C/S1 bZIP transcription factor network: availability of heterodimerization partners controls gene expression during stress response and development.</title>
        <authorList>
            <person name="Weltmeier F."/>
            <person name="Rahmani F."/>
            <person name="Ehlert A."/>
            <person name="Dietrich K."/>
            <person name="Schuetze K."/>
            <person name="Wang X."/>
            <person name="Chaban C."/>
            <person name="Hanson J."/>
            <person name="Teige M."/>
            <person name="Harter K."/>
            <person name="Vicente-Carbajosa J."/>
            <person name="Smeekens S."/>
            <person name="Droege-Laser W."/>
        </authorList>
    </citation>
    <scope>TISSUE SPECIFICITY</scope>
    <scope>DEVELOPMENTAL STAGE</scope>
    <source>
        <strain>cv. Columbia</strain>
    </source>
</reference>
<reference key="13">
    <citation type="journal article" date="2009" name="Plant Physiol.">
        <title>A nuclear gene encoding the iron-sulfur subunit of mitochondrial complex II is regulated by B3 domain transcription factors during seed development in Arabidopsis.</title>
        <authorList>
            <person name="Roschzttardtz H."/>
            <person name="Fuentes I."/>
            <person name="Vasquez M."/>
            <person name="Corvalan C."/>
            <person name="Leon G."/>
            <person name="Gomez I."/>
            <person name="Araya A."/>
            <person name="Holuigue L."/>
            <person name="Vicente-Carbajosa J."/>
            <person name="Jordana X."/>
        </authorList>
    </citation>
    <scope>FUNCTION</scope>
    <scope>INTERACTION WITH BZIP53</scope>
</reference>
<reference key="14">
    <citation type="journal article" date="2009" name="Plant Physiol.">
        <title>Large-scale Arabidopsis phosphoproteome profiling reveals novel chloroplast kinase substrates and phosphorylation networks.</title>
        <authorList>
            <person name="Reiland S."/>
            <person name="Messerli G."/>
            <person name="Baerenfaller K."/>
            <person name="Gerrits B."/>
            <person name="Endler A."/>
            <person name="Grossmann J."/>
            <person name="Gruissem W."/>
            <person name="Baginsky S."/>
        </authorList>
    </citation>
    <scope>PHOSPHORYLATION [LARGE SCALE ANALYSIS] AT SER-213</scope>
    <scope>IDENTIFICATION BY MASS SPECTROMETRY [LARGE SCALE ANALYSIS]</scope>
</reference>
<reference key="15">
    <citation type="journal article" date="2010" name="Mol. Plant">
        <title>The arabidopsis bZIP1 transcription factor is involved in sugar signaling, protein networking, and DNA binding.</title>
        <authorList>
            <person name="Kang S.G."/>
            <person name="Price J."/>
            <person name="Lin P.-C."/>
            <person name="Hong J.C."/>
            <person name="Jang J.-C."/>
        </authorList>
    </citation>
    <scope>INTERACTION WITH BZIP1 AND BZIP63</scope>
</reference>
<keyword id="KW-0025">Alternative splicing</keyword>
<keyword id="KW-0238">DNA-binding</keyword>
<keyword id="KW-0539">Nucleus</keyword>
<keyword id="KW-0597">Phosphoprotein</keyword>
<keyword id="KW-1185">Reference proteome</keyword>
<keyword id="KW-0708">Seed storage protein</keyword>
<keyword id="KW-0758">Storage protein</keyword>
<keyword id="KW-0804">Transcription</keyword>
<keyword id="KW-0805">Transcription regulation</keyword>
<proteinExistence type="evidence at protein level"/>
<sequence length="403" mass="44331">MHIVFSVDDLTESFWPVPAPAPSPGSSSTPSPTQNVADGMTRSQSEWAFHRLINELSGSDSSPTTNTIERSPPPVQSLSRLEETVDETEDVVEIQKPQNHRRLPVDDQGKNRNRAPSSDPVDSSAPVVVDPNQYHAILKSKLELACAAVARRVGTVKPEDSSASASNQKQAQGSIVAQTSPGASSVRFSPTTSTQKKPDVPARQTSISSRDDSDDDDLDGDADNGDPTDVKRARRMLSNRESARRSRRRKQEQMNEFDTQVGQLRAEHSTLINRLSDMNHKYDAAAVDNRILRADIETLRTKVKMAEETVKRVTGVNPLHWSRPNMGIPFSNTPSASSSIPPNSNHILKPANSSTNTSAGLAQNQRVETANFLPEQVNREGMQNPFAPDSNLYETLPHWNHKH</sequence>
<comment type="function">
    <text evidence="4 9 10">Transcription factor that binds to the 5'-ACGT-3' box, especially present in G-box-like motif (5'-CCACGTGGCC-3'), ABRE elements, of seed storage protein (SSP) encoding gene promoters (e.g. At2S and CRU3) and promotes their expression in seeds when in complex with ABI3 and BZIP53.</text>
</comment>
<comment type="subunit">
    <text evidence="4 5 6 7 9 10 11 13">Homodimer (Probable). Forms a heterodimer with BZIP1, BZIP1, BZIP2, BZIP9, BZIP11, BZIP44, BZIP53 and BZIP63. Interacts with ABI3 and forms a complex made of ABI3, BZIP53 and BZIP25.</text>
</comment>
<comment type="interaction">
    <interactant intactId="EBI-942696">
        <id>Q9M1G6</id>
    </interactant>
    <interactant intactId="EBI-942623">
        <id>Q9FGX2</id>
        <label>BZIP1</label>
    </interactant>
    <organismsDiffer>false</organismsDiffer>
    <experiments>6</experiments>
</comment>
<comment type="interaction">
    <interactant intactId="EBI-942696">
        <id>Q9M1G6</id>
    </interactant>
    <interactant intactId="EBI-942769">
        <id>O65683</id>
        <label>BZIP11</label>
    </interactant>
    <organismsDiffer>false</organismsDiffer>
    <experiments>6</experiments>
</comment>
<comment type="interaction">
    <interactant intactId="EBI-942696">
        <id>Q9M1G6</id>
    </interactant>
    <interactant intactId="EBI-942735">
        <id>Q9SI15</id>
        <label>BZIP2</label>
    </interactant>
    <organismsDiffer>false</organismsDiffer>
    <experiments>6</experiments>
</comment>
<comment type="interaction">
    <interactant intactId="EBI-942696">
        <id>Q9M1G6</id>
    </interactant>
    <interactant intactId="EBI-942804">
        <id>C0Z2L5</id>
        <label>BZIP44</label>
    </interactant>
    <organismsDiffer>false</organismsDiffer>
    <experiments>6</experiments>
</comment>
<comment type="interaction">
    <interactant intactId="EBI-942696">
        <id>Q9M1G6</id>
    </interactant>
    <interactant intactId="EBI-942845">
        <id>Q9LZP8</id>
        <label>BZIP53</label>
    </interactant>
    <organismsDiffer>false</organismsDiffer>
    <experiments>6</experiments>
</comment>
<comment type="interaction">
    <interactant intactId="EBI-942696">
        <id>Q9M1G6</id>
    </interactant>
    <interactant intactId="EBI-3133475">
        <id>O81002</id>
        <label>BZIP6</label>
    </interactant>
    <organismsDiffer>false</organismsDiffer>
    <experiments>3</experiments>
</comment>
<comment type="subcellular location">
    <subcellularLocation>
        <location evidence="2">Nucleus</location>
    </subcellularLocation>
</comment>
<comment type="alternative products">
    <event type="alternative splicing"/>
    <isoform>
        <id>Q9M1G6-1</id>
        <name>1</name>
        <sequence type="displayed"/>
    </isoform>
    <isoform>
        <id>Q9M1G6-2</id>
        <name>2</name>
        <sequence type="described" ref="VSP_042645 VSP_042647"/>
    </isoform>
    <isoform>
        <id>Q9M1G6-3</id>
        <name>3</name>
        <sequence type="described" ref="VSP_042644 VSP_042646"/>
    </isoform>
</comment>
<comment type="tissue specificity">
    <text evidence="4 8">Expressed in roots, shoots, stems, leaves, stipulae, siliques, seeds, pollen, and flowers.</text>
</comment>
<comment type="developmental stage">
    <text evidence="4 8">First observed in seeds at early stages of development, mostly in embryo and, at lower extent, in the endosperm. Accumulates and peaks at maturation. Fade out during late seed development steps, restricted to the inner layer of the seed coat, and, at very low levels, in the mature embryo and the remaining endosperm. Also present in the lignified inner subepidermal layer of the valves.</text>
</comment>
<comment type="similarity">
    <text evidence="13">Belongs to the bZIP family.</text>
</comment>
<comment type="sequence caution" evidence="13">
    <conflict type="erroneous gene model prediction">
        <sequence resource="EMBL-CDS" id="AEE79258"/>
    </conflict>
</comment>